<protein>
    <recommendedName>
        <fullName evidence="5">Solute carrier family 2, facilitated glucose transporter member 9</fullName>
    </recommendedName>
    <alternativeName>
        <fullName evidence="2">Glucose transporter type 9</fullName>
        <shortName evidence="2">GLUT-9</shortName>
    </alternativeName>
    <alternativeName>
        <fullName evidence="5">Urate transporter</fullName>
    </alternativeName>
</protein>
<keyword id="KW-1003">Cell membrane</keyword>
<keyword id="KW-0325">Glycoprotein</keyword>
<keyword id="KW-0472">Membrane</keyword>
<keyword id="KW-0597">Phosphoprotein</keyword>
<keyword id="KW-1185">Reference proteome</keyword>
<keyword id="KW-0812">Transmembrane</keyword>
<keyword id="KW-1133">Transmembrane helix</keyword>
<sequence>MARKQNRNSKELGLAPLADDTSHAGPPGPGRALLECDHLRSGLPDGRRRKDWSCSLLVASLAGAFGSSFLYGYNLSVVNAPTPYIKAFYNESWERRHGRPIDPDTLTLLWSVTVSIFAIGGLVGTLMVKMIGKVLGRKHTLLANNGFAISAALLMACSLQAGAFEMLIVGRFIMGIDGGIALSVLPMYLSEISPKEIRGSLGQVTAIFICIGVFTGQLLGLPELLGKESTWPYLFGVIVVPAVVQLLSLPFLPDSPRYLLLEKRNEARAVKAFQTFLGKADVSREVEEVAESRVQRSIRLVSVLELLRAPYVRWQVVTVIVTMACYQLCGLNAIWFYTNSIFGKAGIPPAKIPYVTLSTGGIETLAAIFSGLVIEHLGRRPLLIGGFGLMALFFGTLTVTLTLQDRAPWVPYLSIVGILAIIASFCSGPGGIPFILTGEFFQQSQRPAAFIIAGTVNWLSNFAVGLLFPFIQKSLDTYCFLVFATICMTGAIYLYFVLPETKNRTYAEISQAFSKRNKAYPPEEKIDSAVTDGKTKGRPEQVSSSTLDNYVKNRIVYMDDLTFQET</sequence>
<proteinExistence type="evidence at transcript level"/>
<gene>
    <name evidence="2" type="primary">SLC2A9</name>
    <name evidence="2" type="synonym">GLUT9</name>
</gene>
<evidence type="ECO:0000250" key="1">
    <source>
        <dbReference type="UniProtKB" id="Q3T9X0"/>
    </source>
</evidence>
<evidence type="ECO:0000250" key="2">
    <source>
        <dbReference type="UniProtKB" id="Q9NRM0"/>
    </source>
</evidence>
<evidence type="ECO:0000255" key="3"/>
<evidence type="ECO:0000256" key="4">
    <source>
        <dbReference type="SAM" id="MobiDB-lite"/>
    </source>
</evidence>
<evidence type="ECO:0000305" key="5"/>
<name>GTR9_PONAB</name>
<organism>
    <name type="scientific">Pongo abelii</name>
    <name type="common">Sumatran orangutan</name>
    <name type="synonym">Pongo pygmaeus abelii</name>
    <dbReference type="NCBI Taxonomy" id="9601"/>
    <lineage>
        <taxon>Eukaryota</taxon>
        <taxon>Metazoa</taxon>
        <taxon>Chordata</taxon>
        <taxon>Craniata</taxon>
        <taxon>Vertebrata</taxon>
        <taxon>Euteleostomi</taxon>
        <taxon>Mammalia</taxon>
        <taxon>Eutheria</taxon>
        <taxon>Euarchontoglires</taxon>
        <taxon>Primates</taxon>
        <taxon>Haplorrhini</taxon>
        <taxon>Catarrhini</taxon>
        <taxon>Hominidae</taxon>
        <taxon>Pongo</taxon>
    </lineage>
</organism>
<feature type="chain" id="PRO_0000292552" description="Solute carrier family 2, facilitated glucose transporter member 9">
    <location>
        <begin position="1"/>
        <end position="566"/>
    </location>
</feature>
<feature type="topological domain" description="Cytoplasmic" evidence="3">
    <location>
        <begin position="1"/>
        <end position="51"/>
    </location>
</feature>
<feature type="transmembrane region" description="Helical; Name=1" evidence="3">
    <location>
        <begin position="52"/>
        <end position="72"/>
    </location>
</feature>
<feature type="topological domain" description="Extracellular" evidence="3">
    <location>
        <begin position="73"/>
        <end position="107"/>
    </location>
</feature>
<feature type="transmembrane region" description="Helical; Name=2" evidence="3">
    <location>
        <begin position="108"/>
        <end position="128"/>
    </location>
</feature>
<feature type="topological domain" description="Cytoplasmic" evidence="3">
    <location>
        <begin position="129"/>
        <end position="140"/>
    </location>
</feature>
<feature type="transmembrane region" description="Helical; Name=3" evidence="3">
    <location>
        <begin position="141"/>
        <end position="161"/>
    </location>
</feature>
<feature type="topological domain" description="Extracellular" evidence="3">
    <location>
        <begin position="162"/>
        <end position="171"/>
    </location>
</feature>
<feature type="transmembrane region" description="Helical; Name=4" evidence="3">
    <location>
        <begin position="172"/>
        <end position="192"/>
    </location>
</feature>
<feature type="topological domain" description="Cytoplasmic" evidence="3">
    <location>
        <begin position="193"/>
        <end position="200"/>
    </location>
</feature>
<feature type="transmembrane region" description="Helical; Name=5" evidence="3">
    <location>
        <begin position="201"/>
        <end position="221"/>
    </location>
</feature>
<feature type="topological domain" description="Extracellular" evidence="3">
    <location>
        <begin position="222"/>
        <end position="231"/>
    </location>
</feature>
<feature type="transmembrane region" description="Helical; Name=6" evidence="3">
    <location>
        <begin position="232"/>
        <end position="252"/>
    </location>
</feature>
<feature type="topological domain" description="Cytoplasmic" evidence="3">
    <location>
        <begin position="253"/>
        <end position="316"/>
    </location>
</feature>
<feature type="transmembrane region" description="Helical; Name=7" evidence="3">
    <location>
        <begin position="317"/>
        <end position="337"/>
    </location>
</feature>
<feature type="topological domain" description="Extracellular" evidence="3">
    <location>
        <begin position="338"/>
        <end position="354"/>
    </location>
</feature>
<feature type="transmembrane region" description="Helical; Name=8" evidence="3">
    <location>
        <begin position="355"/>
        <end position="375"/>
    </location>
</feature>
<feature type="topological domain" description="Cytoplasmic" evidence="3">
    <location>
        <begin position="376"/>
        <end position="381"/>
    </location>
</feature>
<feature type="transmembrane region" description="Helical; Name=9" evidence="3">
    <location>
        <begin position="382"/>
        <end position="402"/>
    </location>
</feature>
<feature type="topological domain" description="Extracellular" evidence="3">
    <location>
        <begin position="403"/>
        <end position="415"/>
    </location>
</feature>
<feature type="transmembrane region" description="Helical; Name=10" evidence="3">
    <location>
        <begin position="416"/>
        <end position="436"/>
    </location>
</feature>
<feature type="topological domain" description="Cytoplasmic" evidence="3">
    <location>
        <begin position="437"/>
        <end position="451"/>
    </location>
</feature>
<feature type="transmembrane region" description="Helical; Name=11" evidence="3">
    <location>
        <begin position="452"/>
        <end position="472"/>
    </location>
</feature>
<feature type="topological domain" description="Extracellular" evidence="3">
    <location>
        <begin position="473"/>
        <end position="478"/>
    </location>
</feature>
<feature type="transmembrane region" description="Helical; Name=12" evidence="3">
    <location>
        <begin position="479"/>
        <end position="499"/>
    </location>
</feature>
<feature type="topological domain" description="Cytoplasmic" evidence="3">
    <location>
        <begin position="500"/>
        <end position="566"/>
    </location>
</feature>
<feature type="region of interest" description="Disordered" evidence="4">
    <location>
        <begin position="1"/>
        <end position="31"/>
    </location>
</feature>
<feature type="region of interest" description="Disordered" evidence="4">
    <location>
        <begin position="524"/>
        <end position="543"/>
    </location>
</feature>
<feature type="compositionally biased region" description="Basic and acidic residues" evidence="4">
    <location>
        <begin position="524"/>
        <end position="539"/>
    </location>
</feature>
<feature type="modified residue" description="Phosphoserine" evidence="2">
    <location>
        <position position="9"/>
    </location>
</feature>
<feature type="modified residue" description="Phosphoserine" evidence="2">
    <location>
        <position position="514"/>
    </location>
</feature>
<feature type="glycosylation site" description="N-linked (GlcNAc...) asparagine" evidence="3">
    <location>
        <position position="74"/>
    </location>
</feature>
<feature type="glycosylation site" description="N-linked (GlcNAc...) asparagine" evidence="3">
    <location>
        <position position="90"/>
    </location>
</feature>
<comment type="function">
    <text evidence="2">High-capacity urate transporter, which may play a role in the urate reabsorption by proximal tubules. May have a residual high-affinity, low-capacity glucose and fructose transporter activity. Transports urate at rates 45- to 60-fold faster than glucose. Does not transport galactose. May mediate small uptake of adenine but not of other nucleobases.</text>
</comment>
<comment type="catalytic activity">
    <reaction evidence="2">
        <text>urate(out) = urate(in)</text>
        <dbReference type="Rhea" id="RHEA:60368"/>
        <dbReference type="ChEBI" id="CHEBI:17775"/>
    </reaction>
</comment>
<comment type="subcellular location">
    <subcellularLocation>
        <location evidence="1">Basolateral cell membrane</location>
        <topology evidence="3">Multi-pass membrane protein</topology>
    </subcellularLocation>
    <subcellularLocation>
        <location evidence="1">Apical cell membrane</location>
        <topology evidence="3">Multi-pass membrane protein</topology>
    </subcellularLocation>
</comment>
<comment type="similarity">
    <text evidence="5">Belongs to the major facilitator superfamily. Sugar transporter (TC 2.A.1.1) family.</text>
</comment>
<comment type="caution">
    <text evidence="2">High-capacity urate transporter that was first described as a fructose and glucose transporter. Also described in the literature as high-affinity and low-capacity glucose and fructose transporter (By similarity). However, another group could not confirm transporter activity for glucose or fructose (By similarity).</text>
</comment>
<dbReference type="EMBL" id="CR858850">
    <property type="protein sequence ID" value="CAH91051.1"/>
    <property type="molecule type" value="mRNA"/>
</dbReference>
<dbReference type="SMR" id="Q5RB09"/>
<dbReference type="FunCoup" id="Q5RB09">
    <property type="interactions" value="290"/>
</dbReference>
<dbReference type="STRING" id="9601.ENSPPYP00000016315"/>
<dbReference type="GlyCosmos" id="Q5RB09">
    <property type="glycosylation" value="2 sites, No reported glycans"/>
</dbReference>
<dbReference type="eggNOG" id="KOG0569">
    <property type="taxonomic scope" value="Eukaryota"/>
</dbReference>
<dbReference type="InParanoid" id="Q5RB09"/>
<dbReference type="Proteomes" id="UP000001595">
    <property type="component" value="Unplaced"/>
</dbReference>
<dbReference type="GO" id="GO:0016324">
    <property type="term" value="C:apical plasma membrane"/>
    <property type="evidence" value="ECO:0000250"/>
    <property type="project" value="UniProtKB"/>
</dbReference>
<dbReference type="GO" id="GO:0016323">
    <property type="term" value="C:basolateral plasma membrane"/>
    <property type="evidence" value="ECO:0000250"/>
    <property type="project" value="UniProtKB"/>
</dbReference>
<dbReference type="GO" id="GO:0015149">
    <property type="term" value="F:hexose transmembrane transporter activity"/>
    <property type="evidence" value="ECO:0007669"/>
    <property type="project" value="TreeGrafter"/>
</dbReference>
<dbReference type="GO" id="GO:0015143">
    <property type="term" value="F:urate transmembrane transporter activity"/>
    <property type="evidence" value="ECO:0000250"/>
    <property type="project" value="UniProtKB"/>
</dbReference>
<dbReference type="GO" id="GO:0070837">
    <property type="term" value="P:dehydroascorbic acid transport"/>
    <property type="evidence" value="ECO:0007669"/>
    <property type="project" value="TreeGrafter"/>
</dbReference>
<dbReference type="GO" id="GO:0015747">
    <property type="term" value="P:urate transport"/>
    <property type="evidence" value="ECO:0000250"/>
    <property type="project" value="UniProtKB"/>
</dbReference>
<dbReference type="CDD" id="cd17432">
    <property type="entry name" value="MFS_GLUT_Class2"/>
    <property type="match status" value="1"/>
</dbReference>
<dbReference type="FunFam" id="1.20.1250.20:FF:000029">
    <property type="entry name" value="solute carrier family 2, facilitated glucose transporter member 4"/>
    <property type="match status" value="1"/>
</dbReference>
<dbReference type="Gene3D" id="1.20.1250.20">
    <property type="entry name" value="MFS general substrate transporter like domains"/>
    <property type="match status" value="1"/>
</dbReference>
<dbReference type="InterPro" id="IPR045263">
    <property type="entry name" value="GLUT"/>
</dbReference>
<dbReference type="InterPro" id="IPR020846">
    <property type="entry name" value="MFS_dom"/>
</dbReference>
<dbReference type="InterPro" id="IPR005828">
    <property type="entry name" value="MFS_sugar_transport-like"/>
</dbReference>
<dbReference type="InterPro" id="IPR036259">
    <property type="entry name" value="MFS_trans_sf"/>
</dbReference>
<dbReference type="InterPro" id="IPR003663">
    <property type="entry name" value="Sugar/inositol_transpt"/>
</dbReference>
<dbReference type="InterPro" id="IPR005829">
    <property type="entry name" value="Sugar_transporter_CS"/>
</dbReference>
<dbReference type="NCBIfam" id="TIGR00879">
    <property type="entry name" value="SP"/>
    <property type="match status" value="1"/>
</dbReference>
<dbReference type="PANTHER" id="PTHR23503">
    <property type="entry name" value="SOLUTE CARRIER FAMILY 2"/>
    <property type="match status" value="1"/>
</dbReference>
<dbReference type="PANTHER" id="PTHR23503:SF35">
    <property type="entry name" value="SOLUTE CARRIER FAMILY 2, FACILITATED GLUCOSE TRANSPORTER MEMBER 9"/>
    <property type="match status" value="1"/>
</dbReference>
<dbReference type="Pfam" id="PF00083">
    <property type="entry name" value="Sugar_tr"/>
    <property type="match status" value="1"/>
</dbReference>
<dbReference type="PRINTS" id="PR00171">
    <property type="entry name" value="SUGRTRNSPORT"/>
</dbReference>
<dbReference type="SUPFAM" id="SSF103473">
    <property type="entry name" value="MFS general substrate transporter"/>
    <property type="match status" value="1"/>
</dbReference>
<dbReference type="PROSITE" id="PS50850">
    <property type="entry name" value="MFS"/>
    <property type="match status" value="1"/>
</dbReference>
<dbReference type="PROSITE" id="PS00216">
    <property type="entry name" value="SUGAR_TRANSPORT_1"/>
    <property type="match status" value="1"/>
</dbReference>
<dbReference type="PROSITE" id="PS00217">
    <property type="entry name" value="SUGAR_TRANSPORT_2"/>
    <property type="match status" value="1"/>
</dbReference>
<accession>Q5RB09</accession>
<reference key="1">
    <citation type="submission" date="2004-11" db="EMBL/GenBank/DDBJ databases">
        <authorList>
            <consortium name="The German cDNA consortium"/>
        </authorList>
    </citation>
    <scope>NUCLEOTIDE SEQUENCE [LARGE SCALE MRNA]</scope>
    <source>
        <tissue>Kidney</tissue>
    </source>
</reference>